<proteinExistence type="evidence at protein level"/>
<gene>
    <name type="ordered locus">SMU_746c</name>
</gene>
<name>TCMPA_STRMU</name>
<reference key="1">
    <citation type="journal article" date="2002" name="Proc. Natl. Acad. Sci. U.S.A.">
        <title>Genome sequence of Streptococcus mutans UA159, a cariogenic dental pathogen.</title>
        <authorList>
            <person name="Ajdic D.J."/>
            <person name="McShan W.M."/>
            <person name="McLaughlin R.E."/>
            <person name="Savic G."/>
            <person name="Chang J."/>
            <person name="Carson M.B."/>
            <person name="Primeaux C."/>
            <person name="Tian R."/>
            <person name="Kenton S."/>
            <person name="Jia H.G."/>
            <person name="Lin S.P."/>
            <person name="Qian Y."/>
            <person name="Li S."/>
            <person name="Zhu H."/>
            <person name="Najar F.Z."/>
            <person name="Lai H."/>
            <person name="White J."/>
            <person name="Roe B.A."/>
            <person name="Ferretti J.J."/>
        </authorList>
    </citation>
    <scope>NUCLEOTIDE SEQUENCE [LARGE SCALE GENOMIC DNA]</scope>
    <source>
        <strain>ATCC 700610 / UA159</strain>
    </source>
</reference>
<reference key="2">
    <citation type="journal article" date="2014" name="J. Bacteriol.">
        <title>SMU.746-SMU.747, a putative membrane permease complex, is involved in aciduricity, acidogenesis, and biofilm formation in Streptococcus mutans.</title>
        <authorList>
            <person name="Krol J.E."/>
            <person name="Biswas S."/>
            <person name="King C."/>
            <person name="Biswas I."/>
        </authorList>
    </citation>
    <scope>FUNCTION</scope>
    <scope>SUBUNIT</scope>
    <scope>DISRUPTION PHENOTYPE</scope>
    <source>
        <strain>ATCC 700610 / UA159</strain>
    </source>
</reference>
<comment type="function">
    <text evidence="2">Could be part of a two-component membrane permease system responsible for amino acid transport under low pH. Involved in acidogenesis, biofilm formation and low-pH survival.</text>
</comment>
<comment type="subunit">
    <text evidence="3">Interacts with SMU_747c.</text>
</comment>
<comment type="subcellular location">
    <subcellularLocation>
        <location evidence="3">Cell membrane</location>
        <topology evidence="3">Multi-pass membrane protein</topology>
    </subcellularLocation>
</comment>
<comment type="disruption phenotype">
    <text evidence="2">SMU_746c-SMU_747c deletion affects biofilm formation in a medium- and pH-dependent manner. Mutants show a reduced ability to grow in acidified medium, but they survive both short-term or long-term acid stress. Mutants have lower glycolytic activity. Deletion does not affect membrane proton permeability.</text>
</comment>
<comment type="similarity">
    <text evidence="3">Belongs to the UPF0703 family.</text>
</comment>
<feature type="chain" id="PRO_0000426728" description="Putative two-component membrane permease complex subunit SMU_746c">
    <location>
        <begin position="1"/>
        <end position="271"/>
    </location>
</feature>
<feature type="transmembrane region" description="Helical" evidence="1">
    <location>
        <begin position="34"/>
        <end position="54"/>
    </location>
</feature>
<feature type="transmembrane region" description="Helical" evidence="1">
    <location>
        <begin position="70"/>
        <end position="90"/>
    </location>
</feature>
<keyword id="KW-0029">Amino-acid transport</keyword>
<keyword id="KW-1003">Cell membrane</keyword>
<keyword id="KW-0472">Membrane</keyword>
<keyword id="KW-1185">Reference proteome</keyword>
<keyword id="KW-0812">Transmembrane</keyword>
<keyword id="KW-1133">Transmembrane helix</keyword>
<keyword id="KW-0813">Transport</keyword>
<evidence type="ECO:0000255" key="1"/>
<evidence type="ECO:0000269" key="2">
    <source>
    </source>
</evidence>
<evidence type="ECO:0000305" key="3"/>
<protein>
    <recommendedName>
        <fullName>Putative two-component membrane permease complex subunit SMU_746c</fullName>
    </recommendedName>
</protein>
<accession>Q8DUY4</accession>
<dbReference type="EMBL" id="AE014133">
    <property type="protein sequence ID" value="AAN58470.1"/>
    <property type="molecule type" value="Genomic_DNA"/>
</dbReference>
<dbReference type="RefSeq" id="NP_721164.1">
    <property type="nucleotide sequence ID" value="NC_004350.2"/>
</dbReference>
<dbReference type="RefSeq" id="WP_002263632.1">
    <property type="nucleotide sequence ID" value="NC_004350.2"/>
</dbReference>
<dbReference type="SMR" id="Q8DUY4"/>
<dbReference type="STRING" id="210007.SMU_746c"/>
<dbReference type="KEGG" id="smu:SMU_746c"/>
<dbReference type="PATRIC" id="fig|210007.7.peg.660"/>
<dbReference type="eggNOG" id="COG3689">
    <property type="taxonomic scope" value="Bacteria"/>
</dbReference>
<dbReference type="HOGENOM" id="CLU_070027_1_0_9"/>
<dbReference type="OrthoDB" id="9770408at2"/>
<dbReference type="PhylomeDB" id="Q8DUY4"/>
<dbReference type="Proteomes" id="UP000002512">
    <property type="component" value="Chromosome"/>
</dbReference>
<dbReference type="GO" id="GO:0005886">
    <property type="term" value="C:plasma membrane"/>
    <property type="evidence" value="ECO:0007669"/>
    <property type="project" value="UniProtKB-SubCell"/>
</dbReference>
<dbReference type="GO" id="GO:0006865">
    <property type="term" value="P:amino acid transport"/>
    <property type="evidence" value="ECO:0007669"/>
    <property type="project" value="UniProtKB-KW"/>
</dbReference>
<dbReference type="InterPro" id="IPR015402">
    <property type="entry name" value="DUF1980"/>
</dbReference>
<dbReference type="InterPro" id="IPR048447">
    <property type="entry name" value="DUF1980_C"/>
</dbReference>
<dbReference type="InterPro" id="IPR048493">
    <property type="entry name" value="DUF1980_N"/>
</dbReference>
<dbReference type="InterPro" id="IPR052955">
    <property type="entry name" value="UPF0703_membrane_permease"/>
</dbReference>
<dbReference type="NCBIfam" id="TIGR03943">
    <property type="entry name" value="TIGR03943 family putative permease subunit"/>
    <property type="match status" value="1"/>
</dbReference>
<dbReference type="PANTHER" id="PTHR40047">
    <property type="entry name" value="UPF0703 PROTEIN YCGQ"/>
    <property type="match status" value="1"/>
</dbReference>
<dbReference type="PANTHER" id="PTHR40047:SF1">
    <property type="entry name" value="UPF0703 PROTEIN YCGQ"/>
    <property type="match status" value="1"/>
</dbReference>
<dbReference type="Pfam" id="PF09323">
    <property type="entry name" value="DUF1980"/>
    <property type="match status" value="1"/>
</dbReference>
<dbReference type="Pfam" id="PF21537">
    <property type="entry name" value="DUF1980_C"/>
    <property type="match status" value="1"/>
</dbReference>
<sequence length="271" mass="30839">MIRFLILAGYFELGMYLQLSGKLDRYINSHYSYLAYISMALSFILALVQLTIWMKRLKMHSHLSGKAAKFFSPIILAIPVFIGLLVPTVPLDSTTVSAKGYHFPLAAGSTTSGTSSDGTRVQYLKPDTSLYFTKSAYQKEMRATLKKYKGSGKLQITTQNYMEVMEIIYLFPDEFKNRQIEYVGFIYNDPKDKNSQFLFRFGIIHCIADSGVYGLLTTGGQTHYQNNTWVTVSGKLAIEYNQNLKQTLPVLHISQSSQTMQPKNPYVYRVF</sequence>
<organism>
    <name type="scientific">Streptococcus mutans serotype c (strain ATCC 700610 / UA159)</name>
    <dbReference type="NCBI Taxonomy" id="210007"/>
    <lineage>
        <taxon>Bacteria</taxon>
        <taxon>Bacillati</taxon>
        <taxon>Bacillota</taxon>
        <taxon>Bacilli</taxon>
        <taxon>Lactobacillales</taxon>
        <taxon>Streptococcaceae</taxon>
        <taxon>Streptococcus</taxon>
    </lineage>
</organism>